<evidence type="ECO:0000250" key="1"/>
<evidence type="ECO:0000255" key="2"/>
<evidence type="ECO:0000255" key="3">
    <source>
        <dbReference type="PROSITE-ProRule" id="PRU00828"/>
    </source>
</evidence>
<evidence type="ECO:0000256" key="4">
    <source>
        <dbReference type="SAM" id="MobiDB-lite"/>
    </source>
</evidence>
<evidence type="ECO:0000305" key="5"/>
<reference key="1">
    <citation type="journal article" date="2005" name="Nature">
        <title>The genome of the social amoeba Dictyostelium discoideum.</title>
        <authorList>
            <person name="Eichinger L."/>
            <person name="Pachebat J.A."/>
            <person name="Gloeckner G."/>
            <person name="Rajandream M.A."/>
            <person name="Sucgang R."/>
            <person name="Berriman M."/>
            <person name="Song J."/>
            <person name="Olsen R."/>
            <person name="Szafranski K."/>
            <person name="Xu Q."/>
            <person name="Tunggal B."/>
            <person name="Kummerfeld S."/>
            <person name="Madera M."/>
            <person name="Konfortov B.A."/>
            <person name="Rivero F."/>
            <person name="Bankier A.T."/>
            <person name="Lehmann R."/>
            <person name="Hamlin N."/>
            <person name="Davies R."/>
            <person name="Gaudet P."/>
            <person name="Fey P."/>
            <person name="Pilcher K."/>
            <person name="Chen G."/>
            <person name="Saunders D."/>
            <person name="Sodergren E.J."/>
            <person name="Davis P."/>
            <person name="Kerhornou A."/>
            <person name="Nie X."/>
            <person name="Hall N."/>
            <person name="Anjard C."/>
            <person name="Hemphill L."/>
            <person name="Bason N."/>
            <person name="Farbrother P."/>
            <person name="Desany B."/>
            <person name="Just E."/>
            <person name="Morio T."/>
            <person name="Rost R."/>
            <person name="Churcher C.M."/>
            <person name="Cooper J."/>
            <person name="Haydock S."/>
            <person name="van Driessche N."/>
            <person name="Cronin A."/>
            <person name="Goodhead I."/>
            <person name="Muzny D.M."/>
            <person name="Mourier T."/>
            <person name="Pain A."/>
            <person name="Lu M."/>
            <person name="Harper D."/>
            <person name="Lindsay R."/>
            <person name="Hauser H."/>
            <person name="James K.D."/>
            <person name="Quiles M."/>
            <person name="Madan Babu M."/>
            <person name="Saito T."/>
            <person name="Buchrieser C."/>
            <person name="Wardroper A."/>
            <person name="Felder M."/>
            <person name="Thangavelu M."/>
            <person name="Johnson D."/>
            <person name="Knights A."/>
            <person name="Loulseged H."/>
            <person name="Mungall K.L."/>
            <person name="Oliver K."/>
            <person name="Price C."/>
            <person name="Quail M.A."/>
            <person name="Urushihara H."/>
            <person name="Hernandez J."/>
            <person name="Rabbinowitsch E."/>
            <person name="Steffen D."/>
            <person name="Sanders M."/>
            <person name="Ma J."/>
            <person name="Kohara Y."/>
            <person name="Sharp S."/>
            <person name="Simmonds M.N."/>
            <person name="Spiegler S."/>
            <person name="Tivey A."/>
            <person name="Sugano S."/>
            <person name="White B."/>
            <person name="Walker D."/>
            <person name="Woodward J.R."/>
            <person name="Winckler T."/>
            <person name="Tanaka Y."/>
            <person name="Shaulsky G."/>
            <person name="Schleicher M."/>
            <person name="Weinstock G.M."/>
            <person name="Rosenthal A."/>
            <person name="Cox E.C."/>
            <person name="Chisholm R.L."/>
            <person name="Gibbs R.A."/>
            <person name="Loomis W.F."/>
            <person name="Platzer M."/>
            <person name="Kay R.R."/>
            <person name="Williams J.G."/>
            <person name="Dear P.H."/>
            <person name="Noegel A.A."/>
            <person name="Barrell B.G."/>
            <person name="Kuspa A."/>
        </authorList>
    </citation>
    <scope>NUCLEOTIDE SEQUENCE [LARGE SCALE GENOMIC DNA]</scope>
    <source>
        <strain>AX4</strain>
    </source>
</reference>
<proteinExistence type="inferred from homology"/>
<sequence>METLFQKTRVINGEPELIQNESIIYKVDNVSIYDGDQKTQYSNGTVMLSTHRVIWVNKDIGLGLLHQLILNIEALTTGLMGIGSSPKILITLTKRSFRLSFHAGRRDDFLKLYRQSLLNKPSQSPSPTSSTSQFINQPNNNNNNYNNNNSYQTPLQPPQYQQQQKEQQQQYNSYNPYQQQSSQSPQQPQQQYNSYNPYQSYVQQQQQQQQQQQQQQQQQQIPQYQQQTSPPPPNYYEHIQQQQQQQQQQQQQQQQQQQQQQQQQQQQQQQQQQQQQQQQHQQQQRQQSPSLYNSYHSTQQPLPPPSYLQHMQQQQQQSPSPSPQYQQTNSNSLPSQPPQPNYNLQNFINTPIISNNSNNNNTNINGFTSNAGIGGIINQMNKKTLENDKLLSESFSDLNILMEKAKDMVTLSEKLKVTLEKKTGTSTSTEEEEEFRSFLLEMGIESPVTKKTAKSKYHDQLSKQLSDWIITKNILKQHKGSGNNEMITLSDLYCIFNRARGIELISPDDLYRACLLFESLDLPLRLRKFDSGVIVVQSKDENDEQIAKQILDIINENGPLSAFDLAKINSISLHLAKDQLLVGVTSEKLGKLCRDETVEGNILYHINIFVD</sequence>
<keyword id="KW-0175">Coiled coil</keyword>
<keyword id="KW-0963">Cytoplasm</keyword>
<keyword id="KW-0967">Endosome</keyword>
<keyword id="KW-0472">Membrane</keyword>
<keyword id="KW-0653">Protein transport</keyword>
<keyword id="KW-1185">Reference proteome</keyword>
<keyword id="KW-0677">Repeat</keyword>
<keyword id="KW-0813">Transport</keyword>
<protein>
    <recommendedName>
        <fullName>Vacuolar protein-sorting-associated protein 36</fullName>
    </recommendedName>
    <alternativeName>
        <fullName>ESCRT-II complex subunit VPS36</fullName>
    </alternativeName>
</protein>
<name>VPS36_DICDI</name>
<feature type="chain" id="PRO_0000367438" description="Vacuolar protein-sorting-associated protein 36">
    <location>
        <begin position="1"/>
        <end position="611"/>
    </location>
</feature>
<feature type="domain" description="GLUE N-terminal" evidence="3">
    <location>
        <begin position="7"/>
        <end position="94"/>
    </location>
</feature>
<feature type="domain" description="GLUE C-terminal" evidence="3">
    <location>
        <begin position="97"/>
        <end position="129"/>
    </location>
</feature>
<feature type="region of interest" description="Disordered" evidence="4">
    <location>
        <begin position="119"/>
        <end position="193"/>
    </location>
</feature>
<feature type="region of interest" description="Disordered" evidence="4">
    <location>
        <begin position="213"/>
        <end position="243"/>
    </location>
</feature>
<feature type="region of interest" description="Disordered" evidence="4">
    <location>
        <begin position="280"/>
        <end position="346"/>
    </location>
</feature>
<feature type="coiled-coil region" evidence="2">
    <location>
        <begin position="204"/>
        <end position="288"/>
    </location>
</feature>
<feature type="compositionally biased region" description="Low complexity" evidence="4">
    <location>
        <begin position="121"/>
        <end position="193"/>
    </location>
</feature>
<feature type="compositionally biased region" description="Low complexity" evidence="4">
    <location>
        <begin position="213"/>
        <end position="228"/>
    </location>
</feature>
<feature type="compositionally biased region" description="Polar residues" evidence="4">
    <location>
        <begin position="288"/>
        <end position="300"/>
    </location>
</feature>
<feature type="compositionally biased region" description="Low complexity" evidence="4">
    <location>
        <begin position="307"/>
        <end position="334"/>
    </location>
</feature>
<accession>Q54T18</accession>
<organism>
    <name type="scientific">Dictyostelium discoideum</name>
    <name type="common">Social amoeba</name>
    <dbReference type="NCBI Taxonomy" id="44689"/>
    <lineage>
        <taxon>Eukaryota</taxon>
        <taxon>Amoebozoa</taxon>
        <taxon>Evosea</taxon>
        <taxon>Eumycetozoa</taxon>
        <taxon>Dictyostelia</taxon>
        <taxon>Dictyosteliales</taxon>
        <taxon>Dictyosteliaceae</taxon>
        <taxon>Dictyostelium</taxon>
    </lineage>
</organism>
<gene>
    <name type="primary">vps36</name>
    <name type="ORF">DDB_G0282045</name>
</gene>
<comment type="function">
    <text evidence="1">Component of the ESCRT-II complex, which is required for multivesicular body (MVB) formation and sorting of endosomal cargo proteins into MVBs. The MVB pathway mediates delivery of transmembrane proteins into the lumen of the lysosome for degradation (By similarity).</text>
</comment>
<comment type="subunit">
    <text evidence="1">Component of the endosomal sorting required for transport complex II (ESCRT-II).</text>
</comment>
<comment type="subcellular location">
    <subcellularLocation>
        <location evidence="1">Cytoplasm</location>
    </subcellularLocation>
    <subcellularLocation>
        <location evidence="1">Endosome membrane</location>
        <topology evidence="1">Peripheral membrane protein</topology>
    </subcellularLocation>
</comment>
<comment type="similarity">
    <text evidence="5">Belongs to the VPS36 family.</text>
</comment>
<dbReference type="EMBL" id="AAFI02000044">
    <property type="protein sequence ID" value="EAL66444.1"/>
    <property type="molecule type" value="Genomic_DNA"/>
</dbReference>
<dbReference type="RefSeq" id="XP_640433.1">
    <property type="nucleotide sequence ID" value="XM_635341.1"/>
</dbReference>
<dbReference type="SMR" id="Q54T18"/>
<dbReference type="FunCoup" id="Q54T18">
    <property type="interactions" value="91"/>
</dbReference>
<dbReference type="STRING" id="44689.Q54T18"/>
<dbReference type="GlyGen" id="Q54T18">
    <property type="glycosylation" value="1 site"/>
</dbReference>
<dbReference type="PaxDb" id="44689-DDB0234028"/>
<dbReference type="EnsemblProtists" id="EAL66444">
    <property type="protein sequence ID" value="EAL66444"/>
    <property type="gene ID" value="DDB_G0282045"/>
</dbReference>
<dbReference type="GeneID" id="8623388"/>
<dbReference type="KEGG" id="ddi:DDB_G0282045"/>
<dbReference type="dictyBase" id="DDB_G0282045">
    <property type="gene designation" value="vps36"/>
</dbReference>
<dbReference type="VEuPathDB" id="AmoebaDB:DDB_G0282045"/>
<dbReference type="eggNOG" id="KOG2760">
    <property type="taxonomic scope" value="Eukaryota"/>
</dbReference>
<dbReference type="HOGENOM" id="CLU_447210_0_0_1"/>
<dbReference type="InParanoid" id="Q54T18"/>
<dbReference type="OMA" id="FRLSFHA"/>
<dbReference type="Reactome" id="R-DDI-917729">
    <property type="pathway name" value="Endosomal Sorting Complex Required For Transport (ESCRT)"/>
</dbReference>
<dbReference type="PRO" id="PR:Q54T18"/>
<dbReference type="Proteomes" id="UP000002195">
    <property type="component" value="Chromosome 3"/>
</dbReference>
<dbReference type="GO" id="GO:0000814">
    <property type="term" value="C:ESCRT II complex"/>
    <property type="evidence" value="ECO:0000250"/>
    <property type="project" value="dictyBase"/>
</dbReference>
<dbReference type="GO" id="GO:0031902">
    <property type="term" value="C:late endosome membrane"/>
    <property type="evidence" value="ECO:0000318"/>
    <property type="project" value="GO_Central"/>
</dbReference>
<dbReference type="GO" id="GO:0032266">
    <property type="term" value="F:phosphatidylinositol-3-phosphate binding"/>
    <property type="evidence" value="ECO:0007669"/>
    <property type="project" value="InterPro"/>
</dbReference>
<dbReference type="GO" id="GO:0043130">
    <property type="term" value="F:ubiquitin binding"/>
    <property type="evidence" value="ECO:0000318"/>
    <property type="project" value="GO_Central"/>
</dbReference>
<dbReference type="GO" id="GO:0006605">
    <property type="term" value="P:protein targeting"/>
    <property type="evidence" value="ECO:0000250"/>
    <property type="project" value="dictyBase"/>
</dbReference>
<dbReference type="GO" id="GO:0043328">
    <property type="term" value="P:protein transport to vacuole involved in ubiquitin-dependent protein catabolic process via the multivesicular body sorting pathway"/>
    <property type="evidence" value="ECO:0000318"/>
    <property type="project" value="GO_Central"/>
</dbReference>
<dbReference type="FunFam" id="1.10.10.10:FF:000165">
    <property type="entry name" value="Vacuolar protein sorting protein (Vps36)"/>
    <property type="match status" value="1"/>
</dbReference>
<dbReference type="Gene3D" id="6.10.140.260">
    <property type="match status" value="1"/>
</dbReference>
<dbReference type="Gene3D" id="2.30.29.30">
    <property type="entry name" value="Pleckstrin-homology domain (PH domain)/Phosphotyrosine-binding domain (PTB)"/>
    <property type="match status" value="1"/>
</dbReference>
<dbReference type="Gene3D" id="1.10.10.10">
    <property type="entry name" value="Winged helix-like DNA-binding domain superfamily/Winged helix DNA-binding domain"/>
    <property type="match status" value="2"/>
</dbReference>
<dbReference type="InterPro" id="IPR021648">
    <property type="entry name" value="GLUE_dom"/>
</dbReference>
<dbReference type="InterPro" id="IPR011993">
    <property type="entry name" value="PH-like_dom_sf"/>
</dbReference>
<dbReference type="InterPro" id="IPR040608">
    <property type="entry name" value="Snf8/Vps36"/>
</dbReference>
<dbReference type="InterPro" id="IPR037855">
    <property type="entry name" value="Vps36"/>
</dbReference>
<dbReference type="InterPro" id="IPR036388">
    <property type="entry name" value="WH-like_DNA-bd_sf"/>
</dbReference>
<dbReference type="InterPro" id="IPR036390">
    <property type="entry name" value="WH_DNA-bd_sf"/>
</dbReference>
<dbReference type="PANTHER" id="PTHR13128">
    <property type="entry name" value="VACUOLAR PROTEIN-SORTING-ASSOCIATED PROTEIN 36"/>
    <property type="match status" value="1"/>
</dbReference>
<dbReference type="PANTHER" id="PTHR13128:SF12">
    <property type="entry name" value="VACUOLAR PROTEIN-SORTING-ASSOCIATED PROTEIN 36"/>
    <property type="match status" value="1"/>
</dbReference>
<dbReference type="Pfam" id="PF04157">
    <property type="entry name" value="EAP30"/>
    <property type="match status" value="1"/>
</dbReference>
<dbReference type="Pfam" id="PF11605">
    <property type="entry name" value="Vps36_ESCRT-II"/>
    <property type="match status" value="1"/>
</dbReference>
<dbReference type="SUPFAM" id="SSF50729">
    <property type="entry name" value="PH domain-like"/>
    <property type="match status" value="1"/>
</dbReference>
<dbReference type="SUPFAM" id="SSF46785">
    <property type="entry name" value="Winged helix' DNA-binding domain"/>
    <property type="match status" value="1"/>
</dbReference>
<dbReference type="PROSITE" id="PS51495">
    <property type="entry name" value="GLUE"/>
    <property type="match status" value="1"/>
</dbReference>